<gene>
    <name evidence="1" type="primary">trmY</name>
    <name type="ordered locus">TON_0782</name>
</gene>
<feature type="chain" id="PRO_1000129787" description="tRNA (pseudouridine(54)-N(1))-methyltransferase">
    <location>
        <begin position="1"/>
        <end position="203"/>
    </location>
</feature>
<feature type="binding site" evidence="1">
    <location>
        <position position="135"/>
    </location>
    <ligand>
        <name>S-adenosyl-L-methionine</name>
        <dbReference type="ChEBI" id="CHEBI:59789"/>
    </ligand>
</feature>
<feature type="binding site" evidence="1">
    <location>
        <position position="156"/>
    </location>
    <ligand>
        <name>S-adenosyl-L-methionine</name>
        <dbReference type="ChEBI" id="CHEBI:59789"/>
    </ligand>
</feature>
<proteinExistence type="inferred from homology"/>
<accession>B6YVU7</accession>
<organism>
    <name type="scientific">Thermococcus onnurineus (strain NA1)</name>
    <dbReference type="NCBI Taxonomy" id="523850"/>
    <lineage>
        <taxon>Archaea</taxon>
        <taxon>Methanobacteriati</taxon>
        <taxon>Methanobacteriota</taxon>
        <taxon>Thermococci</taxon>
        <taxon>Thermococcales</taxon>
        <taxon>Thermococcaceae</taxon>
        <taxon>Thermococcus</taxon>
    </lineage>
</organism>
<keyword id="KW-0963">Cytoplasm</keyword>
<keyword id="KW-0489">Methyltransferase</keyword>
<keyword id="KW-0949">S-adenosyl-L-methionine</keyword>
<keyword id="KW-0808">Transferase</keyword>
<keyword id="KW-0819">tRNA processing</keyword>
<reference key="1">
    <citation type="journal article" date="2008" name="J. Bacteriol.">
        <title>The complete genome sequence of Thermococcus onnurineus NA1 reveals a mixed heterotrophic and carboxydotrophic metabolism.</title>
        <authorList>
            <person name="Lee H.S."/>
            <person name="Kang S.G."/>
            <person name="Bae S.S."/>
            <person name="Lim J.K."/>
            <person name="Cho Y."/>
            <person name="Kim Y.J."/>
            <person name="Jeon J.H."/>
            <person name="Cha S.-S."/>
            <person name="Kwon K.K."/>
            <person name="Kim H.-T."/>
            <person name="Park C.-J."/>
            <person name="Lee H.-W."/>
            <person name="Kim S.I."/>
            <person name="Chun J."/>
            <person name="Colwell R.R."/>
            <person name="Kim S.-J."/>
            <person name="Lee J.-H."/>
        </authorList>
    </citation>
    <scope>NUCLEOTIDE SEQUENCE [LARGE SCALE GENOMIC DNA]</scope>
    <source>
        <strain>NA1</strain>
    </source>
</reference>
<evidence type="ECO:0000255" key="1">
    <source>
        <dbReference type="HAMAP-Rule" id="MF_00587"/>
    </source>
</evidence>
<sequence length="203" mass="22683">MRTFIIKANKAHTKADFKLKDLPGTSGRIDLLCRVLNSAFLLSHGFRKNVRVWLSLYGPPNPPKAIRFEGQGMKPKTLNPDELSTAKLIIKALKVGENLREPSKEIQVLPGIYVSNLTFEDIIRRTLKGATLYYLHEEGRPIERVNFSQNVAFVLGDHEGLTPEDEAFLSGIAEKVSIGRKSYLASHVVAYVNIFLDSITPPP</sequence>
<comment type="function">
    <text evidence="1">Specifically catalyzes the N1-methylation of pseudouridine at position 54 (Psi54) in tRNAs.</text>
</comment>
<comment type="catalytic activity">
    <reaction evidence="1">
        <text>pseudouridine(54) in tRNA + S-adenosyl-L-methionine = N(1)-methylpseudouridine(54) in tRNA + S-adenosyl-L-homocysteine + H(+)</text>
        <dbReference type="Rhea" id="RHEA:55292"/>
        <dbReference type="Rhea" id="RHEA-COMP:14140"/>
        <dbReference type="Rhea" id="RHEA-COMP:14141"/>
        <dbReference type="ChEBI" id="CHEBI:15378"/>
        <dbReference type="ChEBI" id="CHEBI:57856"/>
        <dbReference type="ChEBI" id="CHEBI:59789"/>
        <dbReference type="ChEBI" id="CHEBI:65314"/>
        <dbReference type="ChEBI" id="CHEBI:74890"/>
        <dbReference type="EC" id="2.1.1.257"/>
    </reaction>
</comment>
<comment type="subunit">
    <text evidence="1">Homodimer.</text>
</comment>
<comment type="subcellular location">
    <subcellularLocation>
        <location evidence="1">Cytoplasm</location>
    </subcellularLocation>
</comment>
<comment type="similarity">
    <text evidence="1">Belongs to the methyltransferase superfamily. TrmY family.</text>
</comment>
<protein>
    <recommendedName>
        <fullName evidence="1">tRNA (pseudouridine(54)-N(1))-methyltransferase</fullName>
        <ecNumber evidence="1">2.1.1.257</ecNumber>
    </recommendedName>
</protein>
<name>TRMY_THEON</name>
<dbReference type="EC" id="2.1.1.257" evidence="1"/>
<dbReference type="EMBL" id="CP000855">
    <property type="protein sequence ID" value="ACJ16270.1"/>
    <property type="molecule type" value="Genomic_DNA"/>
</dbReference>
<dbReference type="RefSeq" id="WP_012571742.1">
    <property type="nucleotide sequence ID" value="NC_011529.1"/>
</dbReference>
<dbReference type="SMR" id="B6YVU7"/>
<dbReference type="STRING" id="523850.TON_0782"/>
<dbReference type="GeneID" id="7017085"/>
<dbReference type="KEGG" id="ton:TON_0782"/>
<dbReference type="PATRIC" id="fig|523850.10.peg.788"/>
<dbReference type="eggNOG" id="arCOG01239">
    <property type="taxonomic scope" value="Archaea"/>
</dbReference>
<dbReference type="HOGENOM" id="CLU_107018_0_0_2"/>
<dbReference type="OrthoDB" id="27492at2157"/>
<dbReference type="Proteomes" id="UP000002727">
    <property type="component" value="Chromosome"/>
</dbReference>
<dbReference type="GO" id="GO:0005737">
    <property type="term" value="C:cytoplasm"/>
    <property type="evidence" value="ECO:0007669"/>
    <property type="project" value="UniProtKB-SubCell"/>
</dbReference>
<dbReference type="GO" id="GO:0008757">
    <property type="term" value="F:S-adenosylmethionine-dependent methyltransferase activity"/>
    <property type="evidence" value="ECO:0007669"/>
    <property type="project" value="UniProtKB-UniRule"/>
</dbReference>
<dbReference type="GO" id="GO:0008175">
    <property type="term" value="F:tRNA methyltransferase activity"/>
    <property type="evidence" value="ECO:0007669"/>
    <property type="project" value="UniProtKB-UniRule"/>
</dbReference>
<dbReference type="GO" id="GO:0030488">
    <property type="term" value="P:tRNA methylation"/>
    <property type="evidence" value="ECO:0007669"/>
    <property type="project" value="UniProtKB-UniRule"/>
</dbReference>
<dbReference type="CDD" id="cd18087">
    <property type="entry name" value="TrmY-like"/>
    <property type="match status" value="1"/>
</dbReference>
<dbReference type="Gene3D" id="3.40.1280.10">
    <property type="match status" value="1"/>
</dbReference>
<dbReference type="HAMAP" id="MF_00587">
    <property type="entry name" value="tRNA_methyltr_TrmY"/>
    <property type="match status" value="1"/>
</dbReference>
<dbReference type="InterPro" id="IPR029028">
    <property type="entry name" value="Alpha/beta_knot_MTases"/>
</dbReference>
<dbReference type="InterPro" id="IPR007158">
    <property type="entry name" value="TrmY"/>
</dbReference>
<dbReference type="InterPro" id="IPR029026">
    <property type="entry name" value="tRNA_m1G_MTases_N"/>
</dbReference>
<dbReference type="NCBIfam" id="NF002560">
    <property type="entry name" value="PRK02135.1"/>
    <property type="match status" value="1"/>
</dbReference>
<dbReference type="PANTHER" id="PTHR40703">
    <property type="entry name" value="TRNA (PSEUDOURIDINE(54)-N(1))-METHYLTRANSFERASE"/>
    <property type="match status" value="1"/>
</dbReference>
<dbReference type="PANTHER" id="PTHR40703:SF1">
    <property type="entry name" value="TRNA (PSEUDOURIDINE(54)-N(1))-METHYLTRANSFERASE"/>
    <property type="match status" value="1"/>
</dbReference>
<dbReference type="Pfam" id="PF04013">
    <property type="entry name" value="Methyltrn_RNA_2"/>
    <property type="match status" value="1"/>
</dbReference>
<dbReference type="SUPFAM" id="SSF75217">
    <property type="entry name" value="alpha/beta knot"/>
    <property type="match status" value="1"/>
</dbReference>